<accession>Q82FG6</accession>
<protein>
    <recommendedName>
        <fullName evidence="1">Large ribosomal subunit protein bL9</fullName>
    </recommendedName>
    <alternativeName>
        <fullName evidence="2">50S ribosomal protein L9</fullName>
    </alternativeName>
</protein>
<keyword id="KW-1185">Reference proteome</keyword>
<keyword id="KW-0687">Ribonucleoprotein</keyword>
<keyword id="KW-0689">Ribosomal protein</keyword>
<keyword id="KW-0694">RNA-binding</keyword>
<keyword id="KW-0699">rRNA-binding</keyword>
<sequence length="148" mass="15996">MKIILTHEVSGLGAAGDVVDVKDGYARNYLIPRNFAIRWTKGGEKDVEQIRRARKIHEIQTIEQANEIKARLEGVKVRLAVRSGDAGRLFGSVTPADVASAIKASGGPEVDKRRIELGSPIKTLGAHETSVRLHPEVAAKVNIEVVAA</sequence>
<name>RL9_STRAW</name>
<organism>
    <name type="scientific">Streptomyces avermitilis (strain ATCC 31267 / DSM 46492 / JCM 5070 / NBRC 14893 / NCIMB 12804 / NRRL 8165 / MA-4680)</name>
    <dbReference type="NCBI Taxonomy" id="227882"/>
    <lineage>
        <taxon>Bacteria</taxon>
        <taxon>Bacillati</taxon>
        <taxon>Actinomycetota</taxon>
        <taxon>Actinomycetes</taxon>
        <taxon>Kitasatosporales</taxon>
        <taxon>Streptomycetaceae</taxon>
        <taxon>Streptomyces</taxon>
    </lineage>
</organism>
<feature type="chain" id="PRO_0000236599" description="Large ribosomal subunit protein bL9">
    <location>
        <begin position="1"/>
        <end position="148"/>
    </location>
</feature>
<gene>
    <name evidence="1" type="primary">rplI</name>
    <name type="ordered locus">SAV_4286</name>
</gene>
<proteinExistence type="inferred from homology"/>
<reference key="1">
    <citation type="journal article" date="2001" name="Proc. Natl. Acad. Sci. U.S.A.">
        <title>Genome sequence of an industrial microorganism Streptomyces avermitilis: deducing the ability of producing secondary metabolites.</title>
        <authorList>
            <person name="Omura S."/>
            <person name="Ikeda H."/>
            <person name="Ishikawa J."/>
            <person name="Hanamoto A."/>
            <person name="Takahashi C."/>
            <person name="Shinose M."/>
            <person name="Takahashi Y."/>
            <person name="Horikawa H."/>
            <person name="Nakazawa H."/>
            <person name="Osonoe T."/>
            <person name="Kikuchi H."/>
            <person name="Shiba T."/>
            <person name="Sakaki Y."/>
            <person name="Hattori M."/>
        </authorList>
    </citation>
    <scope>NUCLEOTIDE SEQUENCE [LARGE SCALE GENOMIC DNA]</scope>
    <source>
        <strain>ATCC 31267 / DSM 46492 / JCM 5070 / NBRC 14893 / NCIMB 12804 / NRRL 8165 / MA-4680</strain>
    </source>
</reference>
<reference key="2">
    <citation type="journal article" date="2003" name="Nat. Biotechnol.">
        <title>Complete genome sequence and comparative analysis of the industrial microorganism Streptomyces avermitilis.</title>
        <authorList>
            <person name="Ikeda H."/>
            <person name="Ishikawa J."/>
            <person name="Hanamoto A."/>
            <person name="Shinose M."/>
            <person name="Kikuchi H."/>
            <person name="Shiba T."/>
            <person name="Sakaki Y."/>
            <person name="Hattori M."/>
            <person name="Omura S."/>
        </authorList>
    </citation>
    <scope>NUCLEOTIDE SEQUENCE [LARGE SCALE GENOMIC DNA]</scope>
    <source>
        <strain>ATCC 31267 / DSM 46492 / JCM 5070 / NBRC 14893 / NCIMB 12804 / NRRL 8165 / MA-4680</strain>
    </source>
</reference>
<dbReference type="EMBL" id="BA000030">
    <property type="protein sequence ID" value="BAC71998.1"/>
    <property type="molecule type" value="Genomic_DNA"/>
</dbReference>
<dbReference type="RefSeq" id="WP_010985713.1">
    <property type="nucleotide sequence ID" value="NZ_JZJK01000079.1"/>
</dbReference>
<dbReference type="SMR" id="Q82FG6"/>
<dbReference type="GeneID" id="41541367"/>
<dbReference type="KEGG" id="sma:SAVERM_4286"/>
<dbReference type="eggNOG" id="COG0359">
    <property type="taxonomic scope" value="Bacteria"/>
</dbReference>
<dbReference type="HOGENOM" id="CLU_078938_5_1_11"/>
<dbReference type="OrthoDB" id="9788336at2"/>
<dbReference type="Proteomes" id="UP000000428">
    <property type="component" value="Chromosome"/>
</dbReference>
<dbReference type="GO" id="GO:1990904">
    <property type="term" value="C:ribonucleoprotein complex"/>
    <property type="evidence" value="ECO:0007669"/>
    <property type="project" value="UniProtKB-KW"/>
</dbReference>
<dbReference type="GO" id="GO:0005840">
    <property type="term" value="C:ribosome"/>
    <property type="evidence" value="ECO:0007669"/>
    <property type="project" value="UniProtKB-KW"/>
</dbReference>
<dbReference type="GO" id="GO:0019843">
    <property type="term" value="F:rRNA binding"/>
    <property type="evidence" value="ECO:0007669"/>
    <property type="project" value="UniProtKB-UniRule"/>
</dbReference>
<dbReference type="GO" id="GO:0003735">
    <property type="term" value="F:structural constituent of ribosome"/>
    <property type="evidence" value="ECO:0007669"/>
    <property type="project" value="InterPro"/>
</dbReference>
<dbReference type="GO" id="GO:0006412">
    <property type="term" value="P:translation"/>
    <property type="evidence" value="ECO:0007669"/>
    <property type="project" value="UniProtKB-UniRule"/>
</dbReference>
<dbReference type="FunFam" id="3.10.430.100:FF:000006">
    <property type="entry name" value="50S ribosomal protein L9"/>
    <property type="match status" value="1"/>
</dbReference>
<dbReference type="FunFam" id="3.40.5.10:FF:000003">
    <property type="entry name" value="50S ribosomal protein L9"/>
    <property type="match status" value="1"/>
</dbReference>
<dbReference type="Gene3D" id="3.10.430.100">
    <property type="entry name" value="Ribosomal protein L9, C-terminal domain"/>
    <property type="match status" value="1"/>
</dbReference>
<dbReference type="Gene3D" id="3.40.5.10">
    <property type="entry name" value="Ribosomal protein L9, N-terminal domain"/>
    <property type="match status" value="1"/>
</dbReference>
<dbReference type="HAMAP" id="MF_00503">
    <property type="entry name" value="Ribosomal_bL9"/>
    <property type="match status" value="1"/>
</dbReference>
<dbReference type="InterPro" id="IPR000244">
    <property type="entry name" value="Ribosomal_bL9"/>
</dbReference>
<dbReference type="InterPro" id="IPR009027">
    <property type="entry name" value="Ribosomal_bL9/RNase_H1_N"/>
</dbReference>
<dbReference type="InterPro" id="IPR020594">
    <property type="entry name" value="Ribosomal_bL9_bac/chp"/>
</dbReference>
<dbReference type="InterPro" id="IPR020069">
    <property type="entry name" value="Ribosomal_bL9_C"/>
</dbReference>
<dbReference type="InterPro" id="IPR036791">
    <property type="entry name" value="Ribosomal_bL9_C_sf"/>
</dbReference>
<dbReference type="InterPro" id="IPR020070">
    <property type="entry name" value="Ribosomal_bL9_N"/>
</dbReference>
<dbReference type="InterPro" id="IPR036935">
    <property type="entry name" value="Ribosomal_bL9_N_sf"/>
</dbReference>
<dbReference type="NCBIfam" id="TIGR00158">
    <property type="entry name" value="L9"/>
    <property type="match status" value="1"/>
</dbReference>
<dbReference type="PANTHER" id="PTHR21368">
    <property type="entry name" value="50S RIBOSOMAL PROTEIN L9"/>
    <property type="match status" value="1"/>
</dbReference>
<dbReference type="Pfam" id="PF03948">
    <property type="entry name" value="Ribosomal_L9_C"/>
    <property type="match status" value="1"/>
</dbReference>
<dbReference type="Pfam" id="PF01281">
    <property type="entry name" value="Ribosomal_L9_N"/>
    <property type="match status" value="1"/>
</dbReference>
<dbReference type="SUPFAM" id="SSF55658">
    <property type="entry name" value="L9 N-domain-like"/>
    <property type="match status" value="1"/>
</dbReference>
<dbReference type="SUPFAM" id="SSF55653">
    <property type="entry name" value="Ribosomal protein L9 C-domain"/>
    <property type="match status" value="1"/>
</dbReference>
<dbReference type="PROSITE" id="PS00651">
    <property type="entry name" value="RIBOSOMAL_L9"/>
    <property type="match status" value="1"/>
</dbReference>
<comment type="function">
    <text evidence="1">Binds to the 23S rRNA.</text>
</comment>
<comment type="similarity">
    <text evidence="1">Belongs to the bacterial ribosomal protein bL9 family.</text>
</comment>
<evidence type="ECO:0000255" key="1">
    <source>
        <dbReference type="HAMAP-Rule" id="MF_00503"/>
    </source>
</evidence>
<evidence type="ECO:0000305" key="2"/>